<comment type="function">
    <text evidence="1">May help in the organization of the PsaE and PsaF subunits.</text>
</comment>
<comment type="subcellular location">
    <subcellularLocation>
        <location evidence="1">Plastid</location>
        <location evidence="1">Chloroplast thylakoid membrane</location>
        <topology evidence="1">Single-pass membrane protein</topology>
    </subcellularLocation>
</comment>
<comment type="similarity">
    <text evidence="1">Belongs to the PsaJ family.</text>
</comment>
<gene>
    <name evidence="1" type="primary">psaJ</name>
</gene>
<name>PSAJ_LIRTU</name>
<keyword id="KW-0150">Chloroplast</keyword>
<keyword id="KW-0472">Membrane</keyword>
<keyword id="KW-0602">Photosynthesis</keyword>
<keyword id="KW-0603">Photosystem I</keyword>
<keyword id="KW-0934">Plastid</keyword>
<keyword id="KW-0793">Thylakoid</keyword>
<keyword id="KW-0812">Transmembrane</keyword>
<keyword id="KW-1133">Transmembrane helix</keyword>
<reference key="1">
    <citation type="journal article" date="2006" name="BMC Evol. Biol.">
        <title>Complete plastid genome sequences of Drimys, Liriodendron, and Piper: implications for the phylogenetic relationships of magnoliids.</title>
        <authorList>
            <person name="Cai Z."/>
            <person name="Penaflor C."/>
            <person name="Kuehl J.V."/>
            <person name="Leebens-Mack J."/>
            <person name="Carlson J.E."/>
            <person name="dePamphilis C.W."/>
            <person name="Boore J.L."/>
            <person name="Jansen R.K."/>
        </authorList>
    </citation>
    <scope>NUCLEOTIDE SEQUENCE [LARGE SCALE GENOMIC DNA]</scope>
</reference>
<dbReference type="EMBL" id="DQ899947">
    <property type="protein sequence ID" value="ABI32529.1"/>
    <property type="molecule type" value="Genomic_DNA"/>
</dbReference>
<dbReference type="RefSeq" id="YP_740222.1">
    <property type="nucleotide sequence ID" value="NC_008326.1"/>
</dbReference>
<dbReference type="SMR" id="Q0G9J9"/>
<dbReference type="GeneID" id="4266646"/>
<dbReference type="GO" id="GO:0009535">
    <property type="term" value="C:chloroplast thylakoid membrane"/>
    <property type="evidence" value="ECO:0007669"/>
    <property type="project" value="UniProtKB-SubCell"/>
</dbReference>
<dbReference type="GO" id="GO:0009522">
    <property type="term" value="C:photosystem I"/>
    <property type="evidence" value="ECO:0007669"/>
    <property type="project" value="UniProtKB-KW"/>
</dbReference>
<dbReference type="GO" id="GO:0015979">
    <property type="term" value="P:photosynthesis"/>
    <property type="evidence" value="ECO:0007669"/>
    <property type="project" value="UniProtKB-UniRule"/>
</dbReference>
<dbReference type="FunFam" id="1.20.5.510:FF:000001">
    <property type="entry name" value="Photosystem I reaction center subunit IX"/>
    <property type="match status" value="1"/>
</dbReference>
<dbReference type="Gene3D" id="1.20.5.510">
    <property type="entry name" value="Single helix bin"/>
    <property type="match status" value="1"/>
</dbReference>
<dbReference type="HAMAP" id="MF_00522">
    <property type="entry name" value="PSI_PsaJ"/>
    <property type="match status" value="1"/>
</dbReference>
<dbReference type="InterPro" id="IPR002615">
    <property type="entry name" value="PSI_PsaJ"/>
</dbReference>
<dbReference type="InterPro" id="IPR036062">
    <property type="entry name" value="PSI_PsaJ_sf"/>
</dbReference>
<dbReference type="PANTHER" id="PTHR36082">
    <property type="match status" value="1"/>
</dbReference>
<dbReference type="PANTHER" id="PTHR36082:SF2">
    <property type="entry name" value="PHOTOSYSTEM I REACTION CENTER SUBUNIT IX"/>
    <property type="match status" value="1"/>
</dbReference>
<dbReference type="Pfam" id="PF01701">
    <property type="entry name" value="PSI_PsaJ"/>
    <property type="match status" value="1"/>
</dbReference>
<dbReference type="SUPFAM" id="SSF81544">
    <property type="entry name" value="Subunit IX of photosystem I reaction centre, PsaJ"/>
    <property type="match status" value="1"/>
</dbReference>
<feature type="chain" id="PRO_0000276063" description="Photosystem I reaction center subunit IX">
    <location>
        <begin position="1"/>
        <end position="44"/>
    </location>
</feature>
<feature type="transmembrane region" description="Helical" evidence="1">
    <location>
        <begin position="7"/>
        <end position="27"/>
    </location>
</feature>
<evidence type="ECO:0000255" key="1">
    <source>
        <dbReference type="HAMAP-Rule" id="MF_00522"/>
    </source>
</evidence>
<proteinExistence type="inferred from homology"/>
<geneLocation type="chloroplast"/>
<sequence>MRDIKTYLSVAPVLTTLWFGSLAGLLIEINRLFPDALVFPFFSF</sequence>
<accession>Q0G9J9</accession>
<organism>
    <name type="scientific">Liriodendron tulipifera</name>
    <name type="common">Tuliptree</name>
    <name type="synonym">Tulip poplar</name>
    <dbReference type="NCBI Taxonomy" id="3415"/>
    <lineage>
        <taxon>Eukaryota</taxon>
        <taxon>Viridiplantae</taxon>
        <taxon>Streptophyta</taxon>
        <taxon>Embryophyta</taxon>
        <taxon>Tracheophyta</taxon>
        <taxon>Spermatophyta</taxon>
        <taxon>Magnoliopsida</taxon>
        <taxon>Magnoliidae</taxon>
        <taxon>Magnoliales</taxon>
        <taxon>Magnoliaceae</taxon>
        <taxon>Liriodendron</taxon>
    </lineage>
</organism>
<protein>
    <recommendedName>
        <fullName evidence="1">Photosystem I reaction center subunit IX</fullName>
    </recommendedName>
    <alternativeName>
        <fullName evidence="1">PSI-J</fullName>
    </alternativeName>
</protein>